<sequence>MNPNKERLIEIFRSNVKGRIPDISGRNIRHDGRWGHWLEERFGISANADNHADILGYELKNEATSGKTTFGDWSANEYIFKTPPYNSLFSGSTASEKQNAFCRMFGKPNEAKNGRFSWSGSPIPKIWQYNSFGQIMVIEENLDIVIYYSFSQDLRYNKFEIIPPQLQHDEIQIARWYGVANPLLSRRGKTLKDKLEDKFNDLGWFTCTTDSIGAYDKICFGRPITFENWINLVDSGIVYFDSGMYEGNKRPYSQWRADNSYWNSLITDCHQ</sequence>
<feature type="chain" id="PRO_0000077360" description="Type II restriction enzyme ScrFI">
    <location>
        <begin position="1"/>
        <end position="271"/>
    </location>
</feature>
<comment type="function">
    <text evidence="2 4">A P subtype restriction enzyme that recognizes the double-stranded sequence 5'-CCNGG-3' and cleaves after C-2.</text>
</comment>
<comment type="catalytic activity">
    <reaction>
        <text>Endonucleolytic cleavage of DNA to give specific double-stranded fragments with terminal 5'-phosphates.</text>
        <dbReference type="EC" id="3.1.21.4"/>
    </reaction>
</comment>
<comment type="miscellaneous">
    <text evidence="1">The ScrFI restriction system has two different methylases.</text>
</comment>
<dbReference type="EC" id="3.1.21.4"/>
<dbReference type="EMBL" id="U89998">
    <property type="protein sequence ID" value="AAB66695.1"/>
    <property type="molecule type" value="Genomic_DNA"/>
</dbReference>
<dbReference type="RefSeq" id="WP_015081857.1">
    <property type="nucleotide sequence ID" value="NZ_WJUW01000117.1"/>
</dbReference>
<dbReference type="REBASE" id="1639">
    <property type="entry name" value="ScrFI"/>
</dbReference>
<dbReference type="PRO" id="PR:O34104"/>
<dbReference type="GO" id="GO:0009036">
    <property type="term" value="F:type II site-specific deoxyribonuclease activity"/>
    <property type="evidence" value="ECO:0007669"/>
    <property type="project" value="UniProtKB-EC"/>
</dbReference>
<dbReference type="GO" id="GO:0009307">
    <property type="term" value="P:DNA restriction-modification system"/>
    <property type="evidence" value="ECO:0007669"/>
    <property type="project" value="UniProtKB-KW"/>
</dbReference>
<dbReference type="InterPro" id="IPR019063">
    <property type="entry name" value="Restrct_endonuc_II_LlaMI"/>
</dbReference>
<dbReference type="Pfam" id="PF09562">
    <property type="entry name" value="RE_LlaMI"/>
    <property type="match status" value="1"/>
</dbReference>
<organism>
    <name type="scientific">Lactococcus lactis subsp. cremoris</name>
    <name type="common">Streptococcus cremoris</name>
    <dbReference type="NCBI Taxonomy" id="1359"/>
    <lineage>
        <taxon>Bacteria</taxon>
        <taxon>Bacillati</taxon>
        <taxon>Bacillota</taxon>
        <taxon>Bacilli</taxon>
        <taxon>Lactobacillales</taxon>
        <taxon>Streptococcaceae</taxon>
        <taxon>Lactococcus</taxon>
    </lineage>
</organism>
<evidence type="ECO:0000269" key="1">
    <source>
    </source>
</evidence>
<evidence type="ECO:0000303" key="2">
    <source>
    </source>
</evidence>
<evidence type="ECO:0000303" key="3">
    <source>
    </source>
</evidence>
<evidence type="ECO:0000305" key="4">
    <source>
    </source>
</evidence>
<proteinExistence type="predicted"/>
<name>T2S1_LACLC</name>
<accession>O34104</accession>
<protein>
    <recommendedName>
        <fullName evidence="2">Type II restriction enzyme ScrFI</fullName>
        <shortName>R.ScrFI</shortName>
        <ecNumber>3.1.21.4</ecNumber>
    </recommendedName>
    <alternativeName>
        <fullName>Endonuclease ScrFI</fullName>
    </alternativeName>
    <alternativeName>
        <fullName>Type-2 restriction enzyme ScrFI</fullName>
    </alternativeName>
</protein>
<keyword id="KW-0255">Endonuclease</keyword>
<keyword id="KW-0378">Hydrolase</keyword>
<keyword id="KW-0540">Nuclease</keyword>
<keyword id="KW-0680">Restriction system</keyword>
<gene>
    <name evidence="3" type="primary">scrFIR</name>
</gene>
<reference key="1">
    <citation type="journal article" date="1997" name="Microbiology">
        <title>Molecular characterization of the restriction endonuclease gene (scrFIR) associated with the ScrFI restriction/modification system from Lactococcus lactis subsp. cremoris UC503.</title>
        <authorList>
            <person name="Twomey D.P."/>
            <person name="Gabillet N."/>
            <person name="Daly C."/>
            <person name="Fitzgerald G.F."/>
        </authorList>
    </citation>
    <scope>NUCLEOTIDE SEQUENCE [GENOMIC DNA]</scope>
    <scope>FUNCTION</scope>
    <source>
        <strain>UC503</strain>
    </source>
</reference>
<reference key="2">
    <citation type="journal article" date="2003" name="Nucleic Acids Res.">
        <title>A nomenclature for restriction enzymes, DNA methyltransferases, homing endonucleases and their genes.</title>
        <authorList>
            <person name="Roberts R.J."/>
            <person name="Belfort M."/>
            <person name="Bestor T."/>
            <person name="Bhagwat A.S."/>
            <person name="Bickle T.A."/>
            <person name="Bitinaite J."/>
            <person name="Blumenthal R.M."/>
            <person name="Degtyarev S.K."/>
            <person name="Dryden D.T."/>
            <person name="Dybvig K."/>
            <person name="Firman K."/>
            <person name="Gromova E.S."/>
            <person name="Gumport R.I."/>
            <person name="Halford S.E."/>
            <person name="Hattman S."/>
            <person name="Heitman J."/>
            <person name="Hornby D.P."/>
            <person name="Janulaitis A."/>
            <person name="Jeltsch A."/>
            <person name="Josephsen J."/>
            <person name="Kiss A."/>
            <person name="Klaenhammer T.R."/>
            <person name="Kobayashi I."/>
            <person name="Kong H."/>
            <person name="Krueger D.H."/>
            <person name="Lacks S."/>
            <person name="Marinus M.G."/>
            <person name="Miyahara M."/>
            <person name="Morgan R.D."/>
            <person name="Murray N.E."/>
            <person name="Nagaraja V."/>
            <person name="Piekarowicz A."/>
            <person name="Pingoud A."/>
            <person name="Raleigh E."/>
            <person name="Rao D.N."/>
            <person name="Reich N."/>
            <person name="Repin V.E."/>
            <person name="Selker E.U."/>
            <person name="Shaw P.C."/>
            <person name="Stein D.C."/>
            <person name="Stoddard B.L."/>
            <person name="Szybalski W."/>
            <person name="Trautner T.A."/>
            <person name="Van Etten J.L."/>
            <person name="Vitor J.M."/>
            <person name="Wilson G.G."/>
            <person name="Xu S.Y."/>
        </authorList>
    </citation>
    <scope>NOMENCLATURE</scope>
    <scope>SUBTYPE</scope>
</reference>